<name>RF1_CROS8</name>
<organism>
    <name type="scientific">Cronobacter sakazakii (strain ATCC BAA-894)</name>
    <name type="common">Enterobacter sakazakii</name>
    <dbReference type="NCBI Taxonomy" id="290339"/>
    <lineage>
        <taxon>Bacteria</taxon>
        <taxon>Pseudomonadati</taxon>
        <taxon>Pseudomonadota</taxon>
        <taxon>Gammaproteobacteria</taxon>
        <taxon>Enterobacterales</taxon>
        <taxon>Enterobacteriaceae</taxon>
        <taxon>Cronobacter</taxon>
    </lineage>
</organism>
<dbReference type="EMBL" id="CP000783">
    <property type="protein sequence ID" value="ABU76756.1"/>
    <property type="molecule type" value="Genomic_DNA"/>
</dbReference>
<dbReference type="RefSeq" id="WP_007868426.1">
    <property type="nucleotide sequence ID" value="NC_009778.1"/>
</dbReference>
<dbReference type="SMR" id="A7MKC1"/>
<dbReference type="GeneID" id="56730354"/>
<dbReference type="KEGG" id="esa:ESA_01498"/>
<dbReference type="HOGENOM" id="CLU_036856_0_1_6"/>
<dbReference type="Proteomes" id="UP000000260">
    <property type="component" value="Chromosome"/>
</dbReference>
<dbReference type="GO" id="GO:0005737">
    <property type="term" value="C:cytoplasm"/>
    <property type="evidence" value="ECO:0007669"/>
    <property type="project" value="UniProtKB-SubCell"/>
</dbReference>
<dbReference type="GO" id="GO:0016149">
    <property type="term" value="F:translation release factor activity, codon specific"/>
    <property type="evidence" value="ECO:0007669"/>
    <property type="project" value="UniProtKB-UniRule"/>
</dbReference>
<dbReference type="FunFam" id="3.30.160.20:FF:000004">
    <property type="entry name" value="Peptide chain release factor 1"/>
    <property type="match status" value="1"/>
</dbReference>
<dbReference type="FunFam" id="3.30.70.1660:FF:000002">
    <property type="entry name" value="Peptide chain release factor 1"/>
    <property type="match status" value="1"/>
</dbReference>
<dbReference type="FunFam" id="3.30.70.1660:FF:000004">
    <property type="entry name" value="Peptide chain release factor 1"/>
    <property type="match status" value="1"/>
</dbReference>
<dbReference type="Gene3D" id="3.30.160.20">
    <property type="match status" value="1"/>
</dbReference>
<dbReference type="Gene3D" id="3.30.70.1660">
    <property type="match status" value="2"/>
</dbReference>
<dbReference type="Gene3D" id="6.10.140.1950">
    <property type="match status" value="1"/>
</dbReference>
<dbReference type="HAMAP" id="MF_00093">
    <property type="entry name" value="Rel_fac_1"/>
    <property type="match status" value="1"/>
</dbReference>
<dbReference type="InterPro" id="IPR005139">
    <property type="entry name" value="PCRF"/>
</dbReference>
<dbReference type="InterPro" id="IPR000352">
    <property type="entry name" value="Pep_chain_release_fac_I"/>
</dbReference>
<dbReference type="InterPro" id="IPR045853">
    <property type="entry name" value="Pep_chain_release_fac_I_sf"/>
</dbReference>
<dbReference type="InterPro" id="IPR050057">
    <property type="entry name" value="Prokaryotic/Mito_RF"/>
</dbReference>
<dbReference type="InterPro" id="IPR004373">
    <property type="entry name" value="RF-1"/>
</dbReference>
<dbReference type="NCBIfam" id="TIGR00019">
    <property type="entry name" value="prfA"/>
    <property type="match status" value="1"/>
</dbReference>
<dbReference type="NCBIfam" id="NF001859">
    <property type="entry name" value="PRK00591.1"/>
    <property type="match status" value="1"/>
</dbReference>
<dbReference type="PANTHER" id="PTHR43804">
    <property type="entry name" value="LD18447P"/>
    <property type="match status" value="1"/>
</dbReference>
<dbReference type="PANTHER" id="PTHR43804:SF7">
    <property type="entry name" value="LD18447P"/>
    <property type="match status" value="1"/>
</dbReference>
<dbReference type="Pfam" id="PF03462">
    <property type="entry name" value="PCRF"/>
    <property type="match status" value="1"/>
</dbReference>
<dbReference type="Pfam" id="PF00472">
    <property type="entry name" value="RF-1"/>
    <property type="match status" value="1"/>
</dbReference>
<dbReference type="SMART" id="SM00937">
    <property type="entry name" value="PCRF"/>
    <property type="match status" value="1"/>
</dbReference>
<dbReference type="SUPFAM" id="SSF75620">
    <property type="entry name" value="Release factor"/>
    <property type="match status" value="1"/>
</dbReference>
<dbReference type="PROSITE" id="PS00745">
    <property type="entry name" value="RF_PROK_I"/>
    <property type="match status" value="1"/>
</dbReference>
<feature type="chain" id="PRO_1000004888" description="Peptide chain release factor 1">
    <location>
        <begin position="1"/>
        <end position="360"/>
    </location>
</feature>
<feature type="region of interest" description="Disordered" evidence="2">
    <location>
        <begin position="286"/>
        <end position="313"/>
    </location>
</feature>
<feature type="modified residue" description="N5-methylglutamine" evidence="1">
    <location>
        <position position="235"/>
    </location>
</feature>
<protein>
    <recommendedName>
        <fullName evidence="1">Peptide chain release factor 1</fullName>
        <shortName evidence="1">RF-1</shortName>
    </recommendedName>
</protein>
<comment type="function">
    <text evidence="1">Peptide chain release factor 1 directs the termination of translation in response to the peptide chain termination codons UAG and UAA.</text>
</comment>
<comment type="subcellular location">
    <subcellularLocation>
        <location evidence="1">Cytoplasm</location>
    </subcellularLocation>
</comment>
<comment type="PTM">
    <text evidence="1">Methylated by PrmC. Methylation increases the termination efficiency of RF1.</text>
</comment>
<comment type="similarity">
    <text evidence="1">Belongs to the prokaryotic/mitochondrial release factor family.</text>
</comment>
<accession>A7MKC1</accession>
<sequence>MKPSIVAKLEALQERHEEVQALLGDAGTLADQERFRALSREYAQLSDVSRCFLEWRQVQEDMETARLMLSDPEMRDMAQDELLEAKAKSEALEQELQLLLLPKDPDDERNAFVEVRAGTGGDEAALFAGDLFRMYSRYAESRRWRVEIMSASEGEHGGYKEVIAKISGEGVYGRLKFESGGHRVQRVPATESQGRIHTSACTVAVMPELPEAELPDINPADLRIDTFRSSGAGGQHVNTTDSAIRITHLPTGIVVECQDERSQHKNKAKALAVLGARIHAAEVAKRQQAEASTRRNLLGSGDRSDRNRTYNFPQGRVTDHRINLTLYRLDEVMEGKLDALIEPIIQEHQADQLAALAEQE</sequence>
<gene>
    <name evidence="1" type="primary">prfA</name>
    <name type="ordered locus">ESA_01498</name>
</gene>
<proteinExistence type="inferred from homology"/>
<evidence type="ECO:0000255" key="1">
    <source>
        <dbReference type="HAMAP-Rule" id="MF_00093"/>
    </source>
</evidence>
<evidence type="ECO:0000256" key="2">
    <source>
        <dbReference type="SAM" id="MobiDB-lite"/>
    </source>
</evidence>
<reference key="1">
    <citation type="journal article" date="2010" name="PLoS ONE">
        <title>Genome sequence of Cronobacter sakazakii BAA-894 and comparative genomic hybridization analysis with other Cronobacter species.</title>
        <authorList>
            <person name="Kucerova E."/>
            <person name="Clifton S.W."/>
            <person name="Xia X.Q."/>
            <person name="Long F."/>
            <person name="Porwollik S."/>
            <person name="Fulton L."/>
            <person name="Fronick C."/>
            <person name="Minx P."/>
            <person name="Kyung K."/>
            <person name="Warren W."/>
            <person name="Fulton R."/>
            <person name="Feng D."/>
            <person name="Wollam A."/>
            <person name="Shah N."/>
            <person name="Bhonagiri V."/>
            <person name="Nash W.E."/>
            <person name="Hallsworth-Pepin K."/>
            <person name="Wilson R.K."/>
            <person name="McClelland M."/>
            <person name="Forsythe S.J."/>
        </authorList>
    </citation>
    <scope>NUCLEOTIDE SEQUENCE [LARGE SCALE GENOMIC DNA]</scope>
    <source>
        <strain>ATCC BAA-894</strain>
    </source>
</reference>
<keyword id="KW-0963">Cytoplasm</keyword>
<keyword id="KW-0488">Methylation</keyword>
<keyword id="KW-0648">Protein biosynthesis</keyword>
<keyword id="KW-1185">Reference proteome</keyword>